<name>CSPL6_ARATH</name>
<gene>
    <name type="ordered locus">At2g28370</name>
    <name type="ORF">T1B3.11</name>
</gene>
<accession>Q9SKN3</accession>
<sequence length="179" mass="19224">MNVSHASVHPVEDPPAAATEVENPPRVRMDDMEGMPGTLLGLALRFFQFLFAAAALCVMASTSDFPSVTAFCYLVAATGLQSLWSLALAMVDVYAIMVKRSLQNRRLVSLFAIGDGVTSTLTFAAACASAGITVLIDNDLNSCAQNHCVQFETSTALAFISWFAALPSFLFNFWSLASR</sequence>
<reference key="1">
    <citation type="journal article" date="1999" name="Nature">
        <title>Sequence and analysis of chromosome 2 of the plant Arabidopsis thaliana.</title>
        <authorList>
            <person name="Lin X."/>
            <person name="Kaul S."/>
            <person name="Rounsley S.D."/>
            <person name="Shea T.P."/>
            <person name="Benito M.-I."/>
            <person name="Town C.D."/>
            <person name="Fujii C.Y."/>
            <person name="Mason T.M."/>
            <person name="Bowman C.L."/>
            <person name="Barnstead M.E."/>
            <person name="Feldblyum T.V."/>
            <person name="Buell C.R."/>
            <person name="Ketchum K.A."/>
            <person name="Lee J.J."/>
            <person name="Ronning C.M."/>
            <person name="Koo H.L."/>
            <person name="Moffat K.S."/>
            <person name="Cronin L.A."/>
            <person name="Shen M."/>
            <person name="Pai G."/>
            <person name="Van Aken S."/>
            <person name="Umayam L."/>
            <person name="Tallon L.J."/>
            <person name="Gill J.E."/>
            <person name="Adams M.D."/>
            <person name="Carrera A.J."/>
            <person name="Creasy T.H."/>
            <person name="Goodman H.M."/>
            <person name="Somerville C.R."/>
            <person name="Copenhaver G.P."/>
            <person name="Preuss D."/>
            <person name="Nierman W.C."/>
            <person name="White O."/>
            <person name="Eisen J.A."/>
            <person name="Salzberg S.L."/>
            <person name="Fraser C.M."/>
            <person name="Venter J.C."/>
        </authorList>
    </citation>
    <scope>NUCLEOTIDE SEQUENCE [LARGE SCALE GENOMIC DNA]</scope>
    <source>
        <strain>cv. Columbia</strain>
    </source>
</reference>
<reference key="2">
    <citation type="journal article" date="2017" name="Plant J.">
        <title>Araport11: a complete reannotation of the Arabidopsis thaliana reference genome.</title>
        <authorList>
            <person name="Cheng C.Y."/>
            <person name="Krishnakumar V."/>
            <person name="Chan A.P."/>
            <person name="Thibaud-Nissen F."/>
            <person name="Schobel S."/>
            <person name="Town C.D."/>
        </authorList>
    </citation>
    <scope>GENOME REANNOTATION</scope>
    <source>
        <strain>cv. Columbia</strain>
    </source>
</reference>
<reference key="3">
    <citation type="journal article" date="2003" name="Science">
        <title>Empirical analysis of transcriptional activity in the Arabidopsis genome.</title>
        <authorList>
            <person name="Yamada K."/>
            <person name="Lim J."/>
            <person name="Dale J.M."/>
            <person name="Chen H."/>
            <person name="Shinn P."/>
            <person name="Palm C.J."/>
            <person name="Southwick A.M."/>
            <person name="Wu H.C."/>
            <person name="Kim C.J."/>
            <person name="Nguyen M."/>
            <person name="Pham P.K."/>
            <person name="Cheuk R.F."/>
            <person name="Karlin-Newmann G."/>
            <person name="Liu S.X."/>
            <person name="Lam B."/>
            <person name="Sakano H."/>
            <person name="Wu T."/>
            <person name="Yu G."/>
            <person name="Miranda M."/>
            <person name="Quach H.L."/>
            <person name="Tripp M."/>
            <person name="Chang C.H."/>
            <person name="Lee J.M."/>
            <person name="Toriumi M.J."/>
            <person name="Chan M.M."/>
            <person name="Tang C.C."/>
            <person name="Onodera C.S."/>
            <person name="Deng J.M."/>
            <person name="Akiyama K."/>
            <person name="Ansari Y."/>
            <person name="Arakawa T."/>
            <person name="Banh J."/>
            <person name="Banno F."/>
            <person name="Bowser L."/>
            <person name="Brooks S.Y."/>
            <person name="Carninci P."/>
            <person name="Chao Q."/>
            <person name="Choy N."/>
            <person name="Enju A."/>
            <person name="Goldsmith A.D."/>
            <person name="Gurjal M."/>
            <person name="Hansen N.F."/>
            <person name="Hayashizaki Y."/>
            <person name="Johnson-Hopson C."/>
            <person name="Hsuan V.W."/>
            <person name="Iida K."/>
            <person name="Karnes M."/>
            <person name="Khan S."/>
            <person name="Koesema E."/>
            <person name="Ishida J."/>
            <person name="Jiang P.X."/>
            <person name="Jones T."/>
            <person name="Kawai J."/>
            <person name="Kamiya A."/>
            <person name="Meyers C."/>
            <person name="Nakajima M."/>
            <person name="Narusaka M."/>
            <person name="Seki M."/>
            <person name="Sakurai T."/>
            <person name="Satou M."/>
            <person name="Tamse R."/>
            <person name="Vaysberg M."/>
            <person name="Wallender E.K."/>
            <person name="Wong C."/>
            <person name="Yamamura Y."/>
            <person name="Yuan S."/>
            <person name="Shinozaki K."/>
            <person name="Davis R.W."/>
            <person name="Theologis A."/>
            <person name="Ecker J.R."/>
        </authorList>
    </citation>
    <scope>NUCLEOTIDE SEQUENCE [LARGE SCALE MRNA]</scope>
    <source>
        <strain>cv. Columbia</strain>
    </source>
</reference>
<reference key="4">
    <citation type="submission" date="2002-03" db="EMBL/GenBank/DDBJ databases">
        <title>Full-length cDNA from Arabidopsis thaliana.</title>
        <authorList>
            <person name="Brover V.V."/>
            <person name="Troukhan M.E."/>
            <person name="Alexandrov N.A."/>
            <person name="Lu Y.-P."/>
            <person name="Flavell R.B."/>
            <person name="Feldmann K.A."/>
        </authorList>
    </citation>
    <scope>NUCLEOTIDE SEQUENCE [LARGE SCALE MRNA]</scope>
</reference>
<reference key="5">
    <citation type="journal article" date="2014" name="Plant Physiol.">
        <title>Functional and evolutionary analysis of the CASPARIAN STRIP MEMBRANE DOMAIN PROTEIN family.</title>
        <authorList>
            <person name="Roppolo D."/>
            <person name="Boeckmann B."/>
            <person name="Pfister A."/>
            <person name="Boutet E."/>
            <person name="Rubio M.C."/>
            <person name="Denervaud-Tendon V."/>
            <person name="Vermeer J.E."/>
            <person name="Gheyselinck J."/>
            <person name="Xenarios I."/>
            <person name="Geldner N."/>
        </authorList>
    </citation>
    <scope>SUBCELLULAR LOCATION</scope>
    <scope>GENE FAMILY</scope>
    <scope>NOMENCLATURE</scope>
</reference>
<organism>
    <name type="scientific">Arabidopsis thaliana</name>
    <name type="common">Mouse-ear cress</name>
    <dbReference type="NCBI Taxonomy" id="3702"/>
    <lineage>
        <taxon>Eukaryota</taxon>
        <taxon>Viridiplantae</taxon>
        <taxon>Streptophyta</taxon>
        <taxon>Embryophyta</taxon>
        <taxon>Tracheophyta</taxon>
        <taxon>Spermatophyta</taxon>
        <taxon>Magnoliopsida</taxon>
        <taxon>eudicotyledons</taxon>
        <taxon>Gunneridae</taxon>
        <taxon>Pentapetalae</taxon>
        <taxon>rosids</taxon>
        <taxon>malvids</taxon>
        <taxon>Brassicales</taxon>
        <taxon>Brassicaceae</taxon>
        <taxon>Camelineae</taxon>
        <taxon>Arabidopsis</taxon>
    </lineage>
</organism>
<dbReference type="EMBL" id="AC006283">
    <property type="protein sequence ID" value="AAD20689.1"/>
    <property type="molecule type" value="Genomic_DNA"/>
</dbReference>
<dbReference type="EMBL" id="CP002685">
    <property type="protein sequence ID" value="AEC08113.1"/>
    <property type="molecule type" value="Genomic_DNA"/>
</dbReference>
<dbReference type="EMBL" id="AF375441">
    <property type="protein sequence ID" value="AAK53025.1"/>
    <property type="molecule type" value="mRNA"/>
</dbReference>
<dbReference type="EMBL" id="AY085240">
    <property type="protein sequence ID" value="AAM62472.1"/>
    <property type="molecule type" value="mRNA"/>
</dbReference>
<dbReference type="EMBL" id="AY143955">
    <property type="protein sequence ID" value="AAN28894.1"/>
    <property type="molecule type" value="mRNA"/>
</dbReference>
<dbReference type="PIR" id="A84684">
    <property type="entry name" value="A84684"/>
</dbReference>
<dbReference type="RefSeq" id="NP_565671.1">
    <property type="nucleotide sequence ID" value="NM_128397.3"/>
</dbReference>
<dbReference type="FunCoup" id="Q9SKN3">
    <property type="interactions" value="1637"/>
</dbReference>
<dbReference type="STRING" id="3702.Q9SKN3"/>
<dbReference type="PaxDb" id="3702-AT2G28370.1"/>
<dbReference type="ProteomicsDB" id="224436"/>
<dbReference type="EnsemblPlants" id="AT2G28370.1">
    <property type="protein sequence ID" value="AT2G28370.1"/>
    <property type="gene ID" value="AT2G28370"/>
</dbReference>
<dbReference type="GeneID" id="817385"/>
<dbReference type="Gramene" id="AT2G28370.1">
    <property type="protein sequence ID" value="AT2G28370.1"/>
    <property type="gene ID" value="AT2G28370"/>
</dbReference>
<dbReference type="KEGG" id="ath:AT2G28370"/>
<dbReference type="Araport" id="AT2G28370"/>
<dbReference type="TAIR" id="AT2G28370">
    <property type="gene designation" value="CASPL5A2"/>
</dbReference>
<dbReference type="eggNOG" id="ENOG502QTTS">
    <property type="taxonomic scope" value="Eukaryota"/>
</dbReference>
<dbReference type="HOGENOM" id="CLU_103961_0_0_1"/>
<dbReference type="InParanoid" id="Q9SKN3"/>
<dbReference type="OMA" id="MEMASHP"/>
<dbReference type="OrthoDB" id="828022at2759"/>
<dbReference type="PhylomeDB" id="Q9SKN3"/>
<dbReference type="PRO" id="PR:Q9SKN3"/>
<dbReference type="Proteomes" id="UP000006548">
    <property type="component" value="Chromosome 2"/>
</dbReference>
<dbReference type="ExpressionAtlas" id="Q9SKN3">
    <property type="expression patterns" value="baseline and differential"/>
</dbReference>
<dbReference type="GO" id="GO:0005886">
    <property type="term" value="C:plasma membrane"/>
    <property type="evidence" value="ECO:0000314"/>
    <property type="project" value="UniProtKB"/>
</dbReference>
<dbReference type="InterPro" id="IPR006702">
    <property type="entry name" value="CASP_dom"/>
</dbReference>
<dbReference type="InterPro" id="IPR045009">
    <property type="entry name" value="CASPL-5"/>
</dbReference>
<dbReference type="PANTHER" id="PTHR32021:SF16">
    <property type="entry name" value="CASP-LIKE PROTEIN 5A2"/>
    <property type="match status" value="1"/>
</dbReference>
<dbReference type="PANTHER" id="PTHR32021">
    <property type="entry name" value="CASP-LIKE PROTEIN 5B3"/>
    <property type="match status" value="1"/>
</dbReference>
<dbReference type="Pfam" id="PF04535">
    <property type="entry name" value="CASP_dom"/>
    <property type="match status" value="1"/>
</dbReference>
<feature type="chain" id="PRO_0000308657" description="CASP-like protein 5A2">
    <location>
        <begin position="1"/>
        <end position="179"/>
    </location>
</feature>
<feature type="topological domain" description="Cytoplasmic" evidence="2">
    <location>
        <begin position="1"/>
        <end position="38"/>
    </location>
</feature>
<feature type="transmembrane region" description="Helical" evidence="2">
    <location>
        <begin position="39"/>
        <end position="59"/>
    </location>
</feature>
<feature type="topological domain" description="Extracellular" evidence="2">
    <location>
        <begin position="60"/>
        <end position="70"/>
    </location>
</feature>
<feature type="transmembrane region" description="Helical" evidence="2">
    <location>
        <begin position="71"/>
        <end position="91"/>
    </location>
</feature>
<feature type="topological domain" description="Cytoplasmic" evidence="2">
    <location>
        <begin position="92"/>
        <end position="115"/>
    </location>
</feature>
<feature type="transmembrane region" description="Helical" evidence="2">
    <location>
        <begin position="116"/>
        <end position="136"/>
    </location>
</feature>
<feature type="topological domain" description="Extracellular" evidence="2">
    <location>
        <begin position="137"/>
        <end position="155"/>
    </location>
</feature>
<feature type="transmembrane region" description="Helical" evidence="2">
    <location>
        <begin position="156"/>
        <end position="176"/>
    </location>
</feature>
<feature type="topological domain" description="Cytoplasmic" evidence="2">
    <location>
        <begin position="177"/>
        <end position="179"/>
    </location>
</feature>
<feature type="region of interest" description="Disordered" evidence="3">
    <location>
        <begin position="1"/>
        <end position="24"/>
    </location>
</feature>
<evidence type="ECO:0000250" key="1"/>
<evidence type="ECO:0000255" key="2"/>
<evidence type="ECO:0000256" key="3">
    <source>
        <dbReference type="SAM" id="MobiDB-lite"/>
    </source>
</evidence>
<evidence type="ECO:0000269" key="4">
    <source>
    </source>
</evidence>
<evidence type="ECO:0000305" key="5"/>
<keyword id="KW-1003">Cell membrane</keyword>
<keyword id="KW-0472">Membrane</keyword>
<keyword id="KW-1185">Reference proteome</keyword>
<keyword id="KW-0812">Transmembrane</keyword>
<keyword id="KW-1133">Transmembrane helix</keyword>
<protein>
    <recommendedName>
        <fullName>CASP-like protein 5A2</fullName>
        <shortName>AtCASPL5A2</shortName>
    </recommendedName>
</protein>
<proteinExistence type="evidence at transcript level"/>
<comment type="subunit">
    <text evidence="1">Homodimer and heterodimers.</text>
</comment>
<comment type="subcellular location">
    <subcellularLocation>
        <location evidence="4">Cell membrane</location>
        <topology evidence="4">Multi-pass membrane protein</topology>
    </subcellularLocation>
</comment>
<comment type="similarity">
    <text evidence="5">Belongs to the Casparian strip membrane proteins (CASP) family.</text>
</comment>